<feature type="chain" id="PRO_0000314725" description="AMP phosphorylase">
    <location>
        <begin position="1"/>
        <end position="505"/>
    </location>
</feature>
<feature type="active site" description="Proton donor" evidence="1">
    <location>
        <position position="258"/>
    </location>
</feature>
<feature type="binding site" evidence="1">
    <location>
        <position position="170"/>
    </location>
    <ligand>
        <name>AMP</name>
        <dbReference type="ChEBI" id="CHEBI:456215"/>
    </ligand>
</feature>
<feature type="binding site" evidence="1">
    <location>
        <begin position="196"/>
        <end position="201"/>
    </location>
    <ligand>
        <name>AMP</name>
        <dbReference type="ChEBI" id="CHEBI:456215"/>
    </ligand>
</feature>
<feature type="binding site" evidence="1">
    <location>
        <position position="205"/>
    </location>
    <ligand>
        <name>AMP</name>
        <dbReference type="ChEBI" id="CHEBI:456215"/>
    </ligand>
</feature>
<feature type="binding site" evidence="1">
    <location>
        <position position="266"/>
    </location>
    <ligand>
        <name>AMP</name>
        <dbReference type="ChEBI" id="CHEBI:456215"/>
    </ligand>
</feature>
<feature type="binding site" evidence="1">
    <location>
        <position position="290"/>
    </location>
    <ligand>
        <name>AMP</name>
        <dbReference type="ChEBI" id="CHEBI:456215"/>
    </ligand>
</feature>
<comment type="function">
    <text evidence="1">Catalyzes the conversion of AMP and phosphate to adenine and ribose 1,5-bisphosphate (R15P). Exhibits phosphorylase activity toward CMP and UMP in addition to AMP. Functions in an archaeal AMP degradation pathway, together with R15P isomerase and RubisCO.</text>
</comment>
<comment type="catalytic activity">
    <reaction evidence="1">
        <text>AMP + phosphate = alpha-D-ribose 1,5-bisphosphate + adenine</text>
        <dbReference type="Rhea" id="RHEA:36975"/>
        <dbReference type="ChEBI" id="CHEBI:16708"/>
        <dbReference type="ChEBI" id="CHEBI:43474"/>
        <dbReference type="ChEBI" id="CHEBI:68688"/>
        <dbReference type="ChEBI" id="CHEBI:456215"/>
        <dbReference type="EC" id="2.4.2.57"/>
    </reaction>
</comment>
<comment type="catalytic activity">
    <reaction evidence="1">
        <text>CMP + phosphate = cytosine + alpha-D-ribose 1,5-bisphosphate</text>
        <dbReference type="Rhea" id="RHEA:36987"/>
        <dbReference type="ChEBI" id="CHEBI:16040"/>
        <dbReference type="ChEBI" id="CHEBI:43474"/>
        <dbReference type="ChEBI" id="CHEBI:60377"/>
        <dbReference type="ChEBI" id="CHEBI:68688"/>
        <dbReference type="EC" id="2.4.2.57"/>
    </reaction>
</comment>
<comment type="catalytic activity">
    <reaction evidence="1">
        <text>UMP + phosphate = alpha-D-ribose 1,5-bisphosphate + uracil</text>
        <dbReference type="Rhea" id="RHEA:36991"/>
        <dbReference type="ChEBI" id="CHEBI:17568"/>
        <dbReference type="ChEBI" id="CHEBI:43474"/>
        <dbReference type="ChEBI" id="CHEBI:57865"/>
        <dbReference type="ChEBI" id="CHEBI:68688"/>
        <dbReference type="EC" id="2.4.2.57"/>
    </reaction>
</comment>
<comment type="similarity">
    <text evidence="1">Belongs to the thymidine/pyrimidine-nucleoside phosphorylase family. Type 2 subfamily.</text>
</comment>
<dbReference type="EC" id="2.4.2.57" evidence="1"/>
<dbReference type="EMBL" id="CP000742">
    <property type="protein sequence ID" value="ABR55235.1"/>
    <property type="molecule type" value="Genomic_DNA"/>
</dbReference>
<dbReference type="RefSeq" id="WP_012066150.1">
    <property type="nucleotide sequence ID" value="NC_009634.1"/>
</dbReference>
<dbReference type="SMR" id="A6URW3"/>
<dbReference type="STRING" id="406327.Mevan_1338"/>
<dbReference type="GeneID" id="5325128"/>
<dbReference type="KEGG" id="mvn:Mevan_1338"/>
<dbReference type="eggNOG" id="arCOG02013">
    <property type="taxonomic scope" value="Archaea"/>
</dbReference>
<dbReference type="HOGENOM" id="CLU_025040_6_0_2"/>
<dbReference type="OrthoDB" id="9827at2157"/>
<dbReference type="Proteomes" id="UP000001107">
    <property type="component" value="Chromosome"/>
</dbReference>
<dbReference type="GO" id="GO:0005829">
    <property type="term" value="C:cytosol"/>
    <property type="evidence" value="ECO:0007669"/>
    <property type="project" value="TreeGrafter"/>
</dbReference>
<dbReference type="GO" id="GO:0004645">
    <property type="term" value="F:1,4-alpha-oligoglucan phosphorylase activity"/>
    <property type="evidence" value="ECO:0007669"/>
    <property type="project" value="InterPro"/>
</dbReference>
<dbReference type="GO" id="GO:0016208">
    <property type="term" value="F:AMP binding"/>
    <property type="evidence" value="ECO:0007669"/>
    <property type="project" value="UniProtKB-UniRule"/>
</dbReference>
<dbReference type="GO" id="GO:0016763">
    <property type="term" value="F:pentosyltransferase activity"/>
    <property type="evidence" value="ECO:0007669"/>
    <property type="project" value="UniProtKB-UniRule"/>
</dbReference>
<dbReference type="GO" id="GO:0006196">
    <property type="term" value="P:AMP catabolic process"/>
    <property type="evidence" value="ECO:0007669"/>
    <property type="project" value="UniProtKB-UniRule"/>
</dbReference>
<dbReference type="GO" id="GO:0046125">
    <property type="term" value="P:pyrimidine deoxyribonucleoside metabolic process"/>
    <property type="evidence" value="ECO:0007669"/>
    <property type="project" value="InterPro"/>
</dbReference>
<dbReference type="GO" id="GO:0006206">
    <property type="term" value="P:pyrimidine nucleobase metabolic process"/>
    <property type="evidence" value="ECO:0007669"/>
    <property type="project" value="InterPro"/>
</dbReference>
<dbReference type="Gene3D" id="1.20.970.50">
    <property type="match status" value="1"/>
</dbReference>
<dbReference type="Gene3D" id="2.40.40.20">
    <property type="match status" value="1"/>
</dbReference>
<dbReference type="Gene3D" id="3.40.1030.10">
    <property type="entry name" value="Nucleoside phosphorylase/phosphoribosyltransferase catalytic domain"/>
    <property type="match status" value="1"/>
</dbReference>
<dbReference type="Gene3D" id="3.90.1170.30">
    <property type="entry name" value="Pyrimidine nucleoside phosphorylase-like, C-terminal domain"/>
    <property type="match status" value="1"/>
</dbReference>
<dbReference type="HAMAP" id="MF_02132">
    <property type="entry name" value="AMP_phosphorylase"/>
    <property type="match status" value="1"/>
</dbReference>
<dbReference type="InterPro" id="IPR017713">
    <property type="entry name" value="AMP_phosphorylase"/>
</dbReference>
<dbReference type="InterPro" id="IPR000312">
    <property type="entry name" value="Glycosyl_Trfase_fam3"/>
</dbReference>
<dbReference type="InterPro" id="IPR017459">
    <property type="entry name" value="Glycosyl_Trfase_fam3_N_dom"/>
</dbReference>
<dbReference type="InterPro" id="IPR036320">
    <property type="entry name" value="Glycosyl_Trfase_fam3_N_dom_sf"/>
</dbReference>
<dbReference type="InterPro" id="IPR035902">
    <property type="entry name" value="Nuc_phospho_transferase"/>
</dbReference>
<dbReference type="InterPro" id="IPR036566">
    <property type="entry name" value="PYNP-like_C_sf"/>
</dbReference>
<dbReference type="InterPro" id="IPR013102">
    <property type="entry name" value="PYNP_C"/>
</dbReference>
<dbReference type="InterPro" id="IPR017872">
    <property type="entry name" value="Pyrmidine_PPase_CS"/>
</dbReference>
<dbReference type="InterPro" id="IPR013466">
    <property type="entry name" value="Thymidine/AMP_Pase"/>
</dbReference>
<dbReference type="InterPro" id="IPR000053">
    <property type="entry name" value="Thymidine/pyrmidine_PPase"/>
</dbReference>
<dbReference type="NCBIfam" id="TIGR03327">
    <property type="entry name" value="AMP_phos"/>
    <property type="match status" value="1"/>
</dbReference>
<dbReference type="NCBIfam" id="TIGR02645">
    <property type="entry name" value="ARCH_P_rylase"/>
    <property type="match status" value="1"/>
</dbReference>
<dbReference type="NCBIfam" id="NF003338">
    <property type="entry name" value="PRK04350.1"/>
    <property type="match status" value="1"/>
</dbReference>
<dbReference type="PANTHER" id="PTHR10515">
    <property type="entry name" value="THYMIDINE PHOSPHORYLASE"/>
    <property type="match status" value="1"/>
</dbReference>
<dbReference type="PANTHER" id="PTHR10515:SF0">
    <property type="entry name" value="THYMIDINE PHOSPHORYLASE"/>
    <property type="match status" value="1"/>
</dbReference>
<dbReference type="Pfam" id="PF02885">
    <property type="entry name" value="Glycos_trans_3N"/>
    <property type="match status" value="1"/>
</dbReference>
<dbReference type="Pfam" id="PF00591">
    <property type="entry name" value="Glycos_transf_3"/>
    <property type="match status" value="1"/>
</dbReference>
<dbReference type="Pfam" id="PF07831">
    <property type="entry name" value="PYNP_C"/>
    <property type="match status" value="1"/>
</dbReference>
<dbReference type="PIRSF" id="PIRSF000478">
    <property type="entry name" value="TP_PyNP"/>
    <property type="match status" value="1"/>
</dbReference>
<dbReference type="SMART" id="SM00941">
    <property type="entry name" value="PYNP_C"/>
    <property type="match status" value="1"/>
</dbReference>
<dbReference type="SUPFAM" id="SSF52418">
    <property type="entry name" value="Nucleoside phosphorylase/phosphoribosyltransferase catalytic domain"/>
    <property type="match status" value="1"/>
</dbReference>
<dbReference type="SUPFAM" id="SSF47648">
    <property type="entry name" value="Nucleoside phosphorylase/phosphoribosyltransferase N-terminal domain"/>
    <property type="match status" value="1"/>
</dbReference>
<dbReference type="SUPFAM" id="SSF54680">
    <property type="entry name" value="Pyrimidine nucleoside phosphorylase C-terminal domain"/>
    <property type="match status" value="1"/>
</dbReference>
<dbReference type="PROSITE" id="PS00647">
    <property type="entry name" value="THYMID_PHOSPHORYLASE"/>
    <property type="match status" value="1"/>
</dbReference>
<evidence type="ECO:0000255" key="1">
    <source>
        <dbReference type="HAMAP-Rule" id="MF_02132"/>
    </source>
</evidence>
<accession>A6URW3</accession>
<keyword id="KW-0328">Glycosyltransferase</keyword>
<keyword id="KW-0808">Transferase</keyword>
<protein>
    <recommendedName>
        <fullName evidence="1">AMP phosphorylase</fullName>
        <shortName evidence="1">AMPpase</shortName>
        <ecNumber evidence="1">2.4.2.57</ecNumber>
    </recommendedName>
    <alternativeName>
        <fullName evidence="1">Nucleoside monophosphate phosphorylase</fullName>
        <shortName evidence="1">NMP phosphorylase</shortName>
    </alternativeName>
</protein>
<gene>
    <name type="ordered locus">Mevan_1338</name>
</gene>
<name>AMPPA_METVS</name>
<sequence>MLFLNAKFIDLDLGANAVIVNEEDLKGTSYYPQDRVLIESHSGSVLGILYSTKTMVQKGEVGIPVRKMKGISLKEGEEVNLRHAEKPESIQFIKKKMDGQVLSPNEIRTIIDEIVSKKLSNIELAAFVTSTYVNGMNMEEIVEMTKRMAETGDMISWEKSLVVDIHSIGGVPGNKYALLSIPILAAAGITIPKTSSRAITSPAGTADVMEVLTNVELDEEELKRVVKATNGCLVWGGGVNLAPADDIIINVERPVSIDPQPQLLASVMAKKVATGIKYAVIDIPVGKGVKIKNEAEGAKLARKFIELGELLNIRVECVLTYGGQPLGRAIGPALEAKEALEALTDPKSAPKSLIEKAISLAGILLELGGSAQIGDGQKLAWEILESGRALEKFNQIIVEQGGTPKKPEEIELGKYVEEVRSPIDGYIVGINNTSITNVVKEAGAPRDKKAGLLLNAKIGNKVKRGDILYTIYSGSEERLNSAVNLARRVYPVNVEGMMIERISKF</sequence>
<reference key="1">
    <citation type="submission" date="2007-06" db="EMBL/GenBank/DDBJ databases">
        <title>Complete sequence of Methanococcus vannielii SB.</title>
        <authorList>
            <consortium name="US DOE Joint Genome Institute"/>
            <person name="Copeland A."/>
            <person name="Lucas S."/>
            <person name="Lapidus A."/>
            <person name="Barry K."/>
            <person name="Glavina del Rio T."/>
            <person name="Dalin E."/>
            <person name="Tice H."/>
            <person name="Pitluck S."/>
            <person name="Chain P."/>
            <person name="Malfatti S."/>
            <person name="Shin M."/>
            <person name="Vergez L."/>
            <person name="Schmutz J."/>
            <person name="Larimer F."/>
            <person name="Land M."/>
            <person name="Hauser L."/>
            <person name="Kyrpides N."/>
            <person name="Anderson I."/>
            <person name="Sieprawska-Lupa M."/>
            <person name="Whitman W.B."/>
            <person name="Richardson P."/>
        </authorList>
    </citation>
    <scope>NUCLEOTIDE SEQUENCE [LARGE SCALE GENOMIC DNA]</scope>
    <source>
        <strain>ATCC 35089 / DSM 1224 / JCM 13029 / OCM 148 / SB</strain>
    </source>
</reference>
<proteinExistence type="inferred from homology"/>
<organism>
    <name type="scientific">Methanococcus vannielii (strain ATCC 35089 / DSM 1224 / JCM 13029 / OCM 148 / SB)</name>
    <dbReference type="NCBI Taxonomy" id="406327"/>
    <lineage>
        <taxon>Archaea</taxon>
        <taxon>Methanobacteriati</taxon>
        <taxon>Methanobacteriota</taxon>
        <taxon>Methanomada group</taxon>
        <taxon>Methanococci</taxon>
        <taxon>Methanococcales</taxon>
        <taxon>Methanococcaceae</taxon>
        <taxon>Methanococcus</taxon>
    </lineage>
</organism>